<protein>
    <recommendedName>
        <fullName evidence="6">Hydroxyproline O-galactosyltransferase HPGT3</fullName>
        <ecNumber evidence="5">2.4.1.-</ecNumber>
    </recommendedName>
    <alternativeName>
        <fullName evidence="7">Beta-1,3-galactosyltransferase 9</fullName>
    </alternativeName>
</protein>
<evidence type="ECO:0000250" key="1">
    <source>
        <dbReference type="UniProtKB" id="A7XDQ9"/>
    </source>
</evidence>
<evidence type="ECO:0000250" key="2">
    <source>
        <dbReference type="UniProtKB" id="Q94F27"/>
    </source>
</evidence>
<evidence type="ECO:0000255" key="3"/>
<evidence type="ECO:0000256" key="4">
    <source>
        <dbReference type="SAM" id="MobiDB-lite"/>
    </source>
</evidence>
<evidence type="ECO:0000269" key="5">
    <source>
    </source>
</evidence>
<evidence type="ECO:0000303" key="6">
    <source>
    </source>
</evidence>
<evidence type="ECO:0000305" key="7"/>
<evidence type="ECO:0000305" key="8">
    <source>
    </source>
</evidence>
<comment type="function">
    <text evidence="5">Possesses hydroxyproline O-galactosyltransferase activity. Transfers galactose from UDP-galactose to hydroxyproline residues in the arabinogalactan proteins (AGPs). Is specific for AGPs containing non-contiguous peptidyl hydroxyproline residues. The addition of galactose onto the peptidyl hydroxyproline residues in AGP core proteins represents the first committed step in arabinogalactan polysaccharide addition. AGP glycans play essential roles in both vegetative and reproductive plant growth.</text>
</comment>
<comment type="cofactor">
    <cofactor evidence="1">
        <name>Mn(2+)</name>
        <dbReference type="ChEBI" id="CHEBI:29035"/>
    </cofactor>
</comment>
<comment type="pathway">
    <text evidence="7">Protein modification; protein glycosylation.</text>
</comment>
<comment type="subcellular location">
    <subcellularLocation>
        <location evidence="2">Golgi apparatus membrane</location>
        <topology evidence="7">Single-pass type II membrane protein</topology>
    </subcellularLocation>
</comment>
<comment type="tissue specificity">
    <text evidence="5">Expressed in roots, rosette leaves, cauline leaves, stems, flowers and siliques.</text>
</comment>
<comment type="disruption phenotype">
    <text evidence="5">Reduced levels of arabinogalactan proteins.</text>
</comment>
<comment type="similarity">
    <text evidence="7">Belongs to the glycosyltransferase 31 family.</text>
</comment>
<comment type="sequence caution" evidence="7">
    <conflict type="erroneous gene model prediction">
        <sequence resource="EMBL-CDS" id="AAD23661"/>
    </conflict>
</comment>
<accession>Q5XEZ1</accession>
<accession>Q9SIR3</accession>
<organism>
    <name type="scientific">Arabidopsis thaliana</name>
    <name type="common">Mouse-ear cress</name>
    <dbReference type="NCBI Taxonomy" id="3702"/>
    <lineage>
        <taxon>Eukaryota</taxon>
        <taxon>Viridiplantae</taxon>
        <taxon>Streptophyta</taxon>
        <taxon>Embryophyta</taxon>
        <taxon>Tracheophyta</taxon>
        <taxon>Spermatophyta</taxon>
        <taxon>Magnoliopsida</taxon>
        <taxon>eudicotyledons</taxon>
        <taxon>Gunneridae</taxon>
        <taxon>Pentapetalae</taxon>
        <taxon>rosids</taxon>
        <taxon>malvids</taxon>
        <taxon>Brassicales</taxon>
        <taxon>Brassicaceae</taxon>
        <taxon>Camelineae</taxon>
        <taxon>Arabidopsis</taxon>
    </lineage>
</organism>
<keyword id="KW-0328">Glycosyltransferase</keyword>
<keyword id="KW-0333">Golgi apparatus</keyword>
<keyword id="KW-0464">Manganese</keyword>
<keyword id="KW-0472">Membrane</keyword>
<keyword id="KW-1185">Reference proteome</keyword>
<keyword id="KW-0735">Signal-anchor</keyword>
<keyword id="KW-0808">Transferase</keyword>
<keyword id="KW-0812">Transmembrane</keyword>
<keyword id="KW-1133">Transmembrane helix</keyword>
<proteinExistence type="evidence at transcript level"/>
<gene>
    <name evidence="6" type="primary">HPGT3</name>
    <name evidence="8" type="synonym">B3GALT9</name>
    <name type="ordered locus">At2g25300</name>
    <name type="ORF">T22F11.11</name>
</gene>
<sequence>MESLPTTVPSKSERRARSSKFSQSSSKPSVIMAFFSCVAWLYVAGRLWQDAENRVVLNNILKKSYDQKPKVLTVDDKLMVLGCKDLERRIVETEMELTLAKSQGYLKNLKSGSSSGKKLLAVIGVYSGFGSHLRRNTFRGSYMPQGDALRKLEERGIVIRFVIGRSPNRGDSLDRKIDEENQARKDFLILENHEEAQEELAKKVKFFFSAAVQNWDAEFYIKVDDNIDLDLEGLIGLLESRRGQDAAYIGCMKSGEVVAEEGGKWYEPEWWKFGDEKSYFRHAAGSLLILSKTLAQYVNINSGSLKTYAFDDTSIGSWMIGVQATYIDDNRLCCSSIRQDKVCSVA</sequence>
<reference key="1">
    <citation type="journal article" date="1999" name="Nature">
        <title>Sequence and analysis of chromosome 2 of the plant Arabidopsis thaliana.</title>
        <authorList>
            <person name="Lin X."/>
            <person name="Kaul S."/>
            <person name="Rounsley S.D."/>
            <person name="Shea T.P."/>
            <person name="Benito M.-I."/>
            <person name="Town C.D."/>
            <person name="Fujii C.Y."/>
            <person name="Mason T.M."/>
            <person name="Bowman C.L."/>
            <person name="Barnstead M.E."/>
            <person name="Feldblyum T.V."/>
            <person name="Buell C.R."/>
            <person name="Ketchum K.A."/>
            <person name="Lee J.J."/>
            <person name="Ronning C.M."/>
            <person name="Koo H.L."/>
            <person name="Moffat K.S."/>
            <person name="Cronin L.A."/>
            <person name="Shen M."/>
            <person name="Pai G."/>
            <person name="Van Aken S."/>
            <person name="Umayam L."/>
            <person name="Tallon L.J."/>
            <person name="Gill J.E."/>
            <person name="Adams M.D."/>
            <person name="Carrera A.J."/>
            <person name="Creasy T.H."/>
            <person name="Goodman H.M."/>
            <person name="Somerville C.R."/>
            <person name="Copenhaver G.P."/>
            <person name="Preuss D."/>
            <person name="Nierman W.C."/>
            <person name="White O."/>
            <person name="Eisen J.A."/>
            <person name="Salzberg S.L."/>
            <person name="Fraser C.M."/>
            <person name="Venter J.C."/>
        </authorList>
    </citation>
    <scope>NUCLEOTIDE SEQUENCE [LARGE SCALE GENOMIC DNA]</scope>
    <source>
        <strain>cv. Columbia</strain>
    </source>
</reference>
<reference key="2">
    <citation type="journal article" date="2017" name="Plant J.">
        <title>Araport11: a complete reannotation of the Arabidopsis thaliana reference genome.</title>
        <authorList>
            <person name="Cheng C.Y."/>
            <person name="Krishnakumar V."/>
            <person name="Chan A.P."/>
            <person name="Thibaud-Nissen F."/>
            <person name="Schobel S."/>
            <person name="Town C.D."/>
        </authorList>
    </citation>
    <scope>GENOME REANNOTATION</scope>
    <source>
        <strain>cv. Columbia</strain>
    </source>
</reference>
<reference key="3">
    <citation type="submission" date="2005-01" db="EMBL/GenBank/DDBJ databases">
        <title>Arabidopsis ORF clones.</title>
        <authorList>
            <person name="Shinn P."/>
            <person name="Chen H."/>
            <person name="Cheuk R.F."/>
            <person name="Kim C.J."/>
            <person name="Ecker J.R."/>
        </authorList>
    </citation>
    <scope>NUCLEOTIDE SEQUENCE [LARGE SCALE MRNA]</scope>
    <source>
        <strain>cv. Columbia</strain>
    </source>
</reference>
<reference key="4">
    <citation type="journal article" date="2008" name="Plant Mol. Biol.">
        <title>Identification of a novel group of putative Arabidopsis thaliana beta-(1,3)-galactosyltransferases.</title>
        <authorList>
            <person name="Qu Y."/>
            <person name="Egelund J."/>
            <person name="Gilson P.R."/>
            <person name="Houghton F."/>
            <person name="Gleeson P.A."/>
            <person name="Schultz C.J."/>
            <person name="Bacic A."/>
        </authorList>
    </citation>
    <scope>GENE FAMILY</scope>
    <scope>NOMENCLATURE</scope>
</reference>
<reference key="5">
    <citation type="journal article" date="2015" name="Plant J.">
        <title>Identification of three potent hydroxyproline O-galactosyltransferases in Arabidopsis.</title>
        <authorList>
            <person name="Ogawa-Ohnishi M."/>
            <person name="Matsubayashi Y."/>
        </authorList>
    </citation>
    <scope>FUNCTION</scope>
    <scope>TISSUE SPECIFICITY</scope>
    <scope>DISRUPTION PHENOTYPE</scope>
</reference>
<name>B3GT9_ARATH</name>
<feature type="chain" id="PRO_0000359419" description="Hydroxyproline O-galactosyltransferase HPGT3">
    <location>
        <begin position="1"/>
        <end position="346"/>
    </location>
</feature>
<feature type="topological domain" description="Cytoplasmic" evidence="7">
    <location>
        <begin position="1"/>
        <end position="28"/>
    </location>
</feature>
<feature type="transmembrane region" description="Helical; Signal-anchor for type II membrane protein" evidence="3">
    <location>
        <begin position="29"/>
        <end position="45"/>
    </location>
</feature>
<feature type="topological domain" description="Lumenal" evidence="7">
    <location>
        <begin position="46"/>
        <end position="346"/>
    </location>
</feature>
<feature type="region of interest" description="Disordered" evidence="4">
    <location>
        <begin position="1"/>
        <end position="21"/>
    </location>
</feature>
<feature type="compositionally biased region" description="Polar residues" evidence="4">
    <location>
        <begin position="1"/>
        <end position="10"/>
    </location>
</feature>
<dbReference type="EC" id="2.4.1.-" evidence="5"/>
<dbReference type="EMBL" id="AC007070">
    <property type="protein sequence ID" value="AAD23661.1"/>
    <property type="status" value="ALT_SEQ"/>
    <property type="molecule type" value="Genomic_DNA"/>
</dbReference>
<dbReference type="EMBL" id="CP002685">
    <property type="protein sequence ID" value="AEC07684.1"/>
    <property type="molecule type" value="Genomic_DNA"/>
</dbReference>
<dbReference type="EMBL" id="BT015825">
    <property type="protein sequence ID" value="AAU94388.1"/>
    <property type="molecule type" value="mRNA"/>
</dbReference>
<dbReference type="EMBL" id="BT020527">
    <property type="protein sequence ID" value="AAW50705.1"/>
    <property type="molecule type" value="mRNA"/>
</dbReference>
<dbReference type="PIR" id="G84646">
    <property type="entry name" value="G84646"/>
</dbReference>
<dbReference type="RefSeq" id="NP_180102.3">
    <property type="nucleotide sequence ID" value="NM_128087.4"/>
</dbReference>
<dbReference type="SMR" id="Q5XEZ1"/>
<dbReference type="BioGRID" id="2420">
    <property type="interactions" value="1"/>
</dbReference>
<dbReference type="FunCoup" id="Q5XEZ1">
    <property type="interactions" value="2499"/>
</dbReference>
<dbReference type="STRING" id="3702.Q5XEZ1"/>
<dbReference type="CAZy" id="GT31">
    <property type="family name" value="Glycosyltransferase Family 31"/>
</dbReference>
<dbReference type="iPTMnet" id="Q5XEZ1"/>
<dbReference type="PaxDb" id="3702-AT2G25300.1"/>
<dbReference type="ProteomicsDB" id="241181"/>
<dbReference type="EnsemblPlants" id="AT2G25300.1">
    <property type="protein sequence ID" value="AT2G25300.1"/>
    <property type="gene ID" value="AT2G25300"/>
</dbReference>
<dbReference type="GeneID" id="817068"/>
<dbReference type="Gramene" id="AT2G25300.1">
    <property type="protein sequence ID" value="AT2G25300.1"/>
    <property type="gene ID" value="AT2G25300"/>
</dbReference>
<dbReference type="KEGG" id="ath:AT2G25300"/>
<dbReference type="Araport" id="AT2G25300"/>
<dbReference type="TAIR" id="AT2G25300">
    <property type="gene designation" value="HPGT3"/>
</dbReference>
<dbReference type="eggNOG" id="KOG2288">
    <property type="taxonomic scope" value="Eukaryota"/>
</dbReference>
<dbReference type="HOGENOM" id="CLU_040730_1_0_1"/>
<dbReference type="InParanoid" id="Q5XEZ1"/>
<dbReference type="PhylomeDB" id="Q5XEZ1"/>
<dbReference type="UniPathway" id="UPA00378"/>
<dbReference type="PRO" id="PR:Q5XEZ1"/>
<dbReference type="Proteomes" id="UP000006548">
    <property type="component" value="Chromosome 2"/>
</dbReference>
<dbReference type="ExpressionAtlas" id="Q5XEZ1">
    <property type="expression patterns" value="baseline and differential"/>
</dbReference>
<dbReference type="GO" id="GO:0000139">
    <property type="term" value="C:Golgi membrane"/>
    <property type="evidence" value="ECO:0007669"/>
    <property type="project" value="UniProtKB-SubCell"/>
</dbReference>
<dbReference type="GO" id="GO:1990714">
    <property type="term" value="F:hydroxyproline O-galactosyltransferase activity"/>
    <property type="evidence" value="ECO:0000314"/>
    <property type="project" value="TAIR"/>
</dbReference>
<dbReference type="GO" id="GO:0010405">
    <property type="term" value="P:arabinogalactan protein metabolic process"/>
    <property type="evidence" value="ECO:0000315"/>
    <property type="project" value="UniProtKB"/>
</dbReference>
<dbReference type="GO" id="GO:0018258">
    <property type="term" value="P:protein O-linked glycosylation via hydroxyproline"/>
    <property type="evidence" value="ECO:0000314"/>
    <property type="project" value="UniProtKB"/>
</dbReference>
<dbReference type="FunFam" id="3.90.550.50:FF:000023">
    <property type="entry name" value="Hexosyltransferase"/>
    <property type="match status" value="1"/>
</dbReference>
<dbReference type="Gene3D" id="3.90.550.50">
    <property type="match status" value="1"/>
</dbReference>
<dbReference type="InterPro" id="IPR025298">
    <property type="entry name" value="DUF4094"/>
</dbReference>
<dbReference type="InterPro" id="IPR002659">
    <property type="entry name" value="Glyco_trans_31"/>
</dbReference>
<dbReference type="PANTHER" id="PTHR11214">
    <property type="entry name" value="BETA-1,3-N-ACETYLGLUCOSAMINYLTRANSFERASE"/>
    <property type="match status" value="1"/>
</dbReference>
<dbReference type="PANTHER" id="PTHR11214:SF124">
    <property type="entry name" value="HYDROXYPROLINE O-GALACTOSYLTRANSFERASE HPGT3"/>
    <property type="match status" value="1"/>
</dbReference>
<dbReference type="Pfam" id="PF13334">
    <property type="entry name" value="DUF4094"/>
    <property type="match status" value="1"/>
</dbReference>
<dbReference type="Pfam" id="PF01762">
    <property type="entry name" value="Galactosyl_T"/>
    <property type="match status" value="1"/>
</dbReference>